<evidence type="ECO:0000255" key="1">
    <source>
        <dbReference type="PROSITE-ProRule" id="PRU01182"/>
    </source>
</evidence>
<evidence type="ECO:0000305" key="2"/>
<keyword id="KW-0378">Hydrolase</keyword>
<keyword id="KW-0479">Metal-binding</keyword>
<keyword id="KW-0482">Metalloprotease</keyword>
<keyword id="KW-0645">Protease</keyword>
<keyword id="KW-0862">Zinc</keyword>
<organism>
    <name type="scientific">Clostridium botulinum (strain Loch Maree / Type A3)</name>
    <dbReference type="NCBI Taxonomy" id="498214"/>
    <lineage>
        <taxon>Bacteria</taxon>
        <taxon>Bacillati</taxon>
        <taxon>Bacillota</taxon>
        <taxon>Clostridia</taxon>
        <taxon>Eubacteriales</taxon>
        <taxon>Clostridiaceae</taxon>
        <taxon>Clostridium</taxon>
    </lineage>
</organism>
<sequence length="228" mass="25670">MDNNFKIKDLPKNERPQERLIRYGAEVLSNSELLAVILRTGTKNQNIMMLASSLIKETGGLDQLFNQSIEELTKIKGIGVTKAVQILALSELSKRFKTYKSGNEYKISTPLDVSNLVMEDMKYLKQEKLKILILNTKNIVTYIRDVFIGTLNSSIVHPREIFCEAIKKNGASIIICHNHPSGDPTPSKEDINITLRLKKCGKLIGIDLLDHIIIGENKYVSMKEKGTI</sequence>
<accession>B1KZT0</accession>
<dbReference type="EMBL" id="CP000962">
    <property type="protein sequence ID" value="ACA54057.1"/>
    <property type="molecule type" value="Genomic_DNA"/>
</dbReference>
<dbReference type="RefSeq" id="WP_012342208.1">
    <property type="nucleotide sequence ID" value="NC_010520.1"/>
</dbReference>
<dbReference type="SMR" id="B1KZT0"/>
<dbReference type="KEGG" id="cbl:CLK_2387"/>
<dbReference type="HOGENOM" id="CLU_073529_0_2_9"/>
<dbReference type="GO" id="GO:0046872">
    <property type="term" value="F:metal ion binding"/>
    <property type="evidence" value="ECO:0007669"/>
    <property type="project" value="UniProtKB-KW"/>
</dbReference>
<dbReference type="GO" id="GO:0008237">
    <property type="term" value="F:metallopeptidase activity"/>
    <property type="evidence" value="ECO:0007669"/>
    <property type="project" value="UniProtKB-KW"/>
</dbReference>
<dbReference type="GO" id="GO:0006508">
    <property type="term" value="P:proteolysis"/>
    <property type="evidence" value="ECO:0007669"/>
    <property type="project" value="UniProtKB-KW"/>
</dbReference>
<dbReference type="CDD" id="cd08071">
    <property type="entry name" value="MPN_DUF2466"/>
    <property type="match status" value="1"/>
</dbReference>
<dbReference type="Gene3D" id="1.10.150.20">
    <property type="entry name" value="5' to 3' exonuclease, C-terminal subdomain"/>
    <property type="match status" value="1"/>
</dbReference>
<dbReference type="Gene3D" id="3.40.140.10">
    <property type="entry name" value="Cytidine Deaminase, domain 2"/>
    <property type="match status" value="1"/>
</dbReference>
<dbReference type="InterPro" id="IPR037518">
    <property type="entry name" value="MPN"/>
</dbReference>
<dbReference type="InterPro" id="IPR025657">
    <property type="entry name" value="RadC_JAB"/>
</dbReference>
<dbReference type="InterPro" id="IPR010994">
    <property type="entry name" value="RuvA_2-like"/>
</dbReference>
<dbReference type="InterPro" id="IPR001405">
    <property type="entry name" value="UPF0758"/>
</dbReference>
<dbReference type="InterPro" id="IPR020891">
    <property type="entry name" value="UPF0758_CS"/>
</dbReference>
<dbReference type="InterPro" id="IPR046778">
    <property type="entry name" value="UPF0758_N"/>
</dbReference>
<dbReference type="NCBIfam" id="NF000642">
    <property type="entry name" value="PRK00024.1"/>
    <property type="match status" value="1"/>
</dbReference>
<dbReference type="NCBIfam" id="TIGR00608">
    <property type="entry name" value="radc"/>
    <property type="match status" value="1"/>
</dbReference>
<dbReference type="PANTHER" id="PTHR30471">
    <property type="entry name" value="DNA REPAIR PROTEIN RADC"/>
    <property type="match status" value="1"/>
</dbReference>
<dbReference type="PANTHER" id="PTHR30471:SF3">
    <property type="entry name" value="UPF0758 PROTEIN YEES-RELATED"/>
    <property type="match status" value="1"/>
</dbReference>
<dbReference type="Pfam" id="PF04002">
    <property type="entry name" value="RadC"/>
    <property type="match status" value="1"/>
</dbReference>
<dbReference type="Pfam" id="PF20582">
    <property type="entry name" value="UPF0758_N"/>
    <property type="match status" value="1"/>
</dbReference>
<dbReference type="SUPFAM" id="SSF102712">
    <property type="entry name" value="JAB1/MPN domain"/>
    <property type="match status" value="1"/>
</dbReference>
<dbReference type="SUPFAM" id="SSF47781">
    <property type="entry name" value="RuvA domain 2-like"/>
    <property type="match status" value="1"/>
</dbReference>
<dbReference type="PROSITE" id="PS50249">
    <property type="entry name" value="MPN"/>
    <property type="match status" value="1"/>
</dbReference>
<dbReference type="PROSITE" id="PS01302">
    <property type="entry name" value="UPF0758"/>
    <property type="match status" value="1"/>
</dbReference>
<name>Y2387_CLOBM</name>
<protein>
    <recommendedName>
        <fullName>UPF0758 protein CLK_2387</fullName>
    </recommendedName>
</protein>
<feature type="chain" id="PRO_1000089807" description="UPF0758 protein CLK_2387">
    <location>
        <begin position="1"/>
        <end position="228"/>
    </location>
</feature>
<feature type="domain" description="MPN" evidence="1">
    <location>
        <begin position="106"/>
        <end position="228"/>
    </location>
</feature>
<feature type="short sequence motif" description="JAMM motif" evidence="1">
    <location>
        <begin position="177"/>
        <end position="190"/>
    </location>
</feature>
<feature type="binding site" evidence="1">
    <location>
        <position position="177"/>
    </location>
    <ligand>
        <name>Zn(2+)</name>
        <dbReference type="ChEBI" id="CHEBI:29105"/>
        <note>catalytic</note>
    </ligand>
</feature>
<feature type="binding site" evidence="1">
    <location>
        <position position="179"/>
    </location>
    <ligand>
        <name>Zn(2+)</name>
        <dbReference type="ChEBI" id="CHEBI:29105"/>
        <note>catalytic</note>
    </ligand>
</feature>
<feature type="binding site" evidence="1">
    <location>
        <position position="190"/>
    </location>
    <ligand>
        <name>Zn(2+)</name>
        <dbReference type="ChEBI" id="CHEBI:29105"/>
        <note>catalytic</note>
    </ligand>
</feature>
<reference key="1">
    <citation type="journal article" date="2007" name="PLoS ONE">
        <title>Analysis of the neurotoxin complex genes in Clostridium botulinum A1-A4 and B1 strains: BoNT/A3, /Ba4 and /B1 clusters are located within plasmids.</title>
        <authorList>
            <person name="Smith T.J."/>
            <person name="Hill K.K."/>
            <person name="Foley B.T."/>
            <person name="Detter J.C."/>
            <person name="Munk A.C."/>
            <person name="Bruce D.C."/>
            <person name="Doggett N.A."/>
            <person name="Smith L.A."/>
            <person name="Marks J.D."/>
            <person name="Xie G."/>
            <person name="Brettin T.S."/>
        </authorList>
    </citation>
    <scope>NUCLEOTIDE SEQUENCE [LARGE SCALE GENOMIC DNA]</scope>
    <source>
        <strain>Loch Maree / Type A3</strain>
    </source>
</reference>
<comment type="similarity">
    <text evidence="2">Belongs to the UPF0758 family.</text>
</comment>
<proteinExistence type="inferred from homology"/>
<gene>
    <name type="ordered locus">CLK_2387</name>
</gene>